<reference key="1">
    <citation type="journal article" date="2005" name="DNA Res.">
        <title>Complete genome sequence of the facultative anaerobic magnetotactic bacterium Magnetospirillum sp. strain AMB-1.</title>
        <authorList>
            <person name="Matsunaga T."/>
            <person name="Okamura Y."/>
            <person name="Fukuda Y."/>
            <person name="Wahyudi A.T."/>
            <person name="Murase Y."/>
            <person name="Takeyama H."/>
        </authorList>
    </citation>
    <scope>NUCLEOTIDE SEQUENCE [LARGE SCALE GENOMIC DNA]</scope>
    <source>
        <strain>ATCC 700264 / AMB-1</strain>
    </source>
</reference>
<reference key="2">
    <citation type="journal article" date="2010" name="Proc. Natl. Acad. Sci. U.S.A.">
        <title>Comprehensive genetic dissection of the magnetosome gene island reveals the step-wise assembly of a prokaryotic organelle.</title>
        <authorList>
            <person name="Murat D."/>
            <person name="Quinlan A."/>
            <person name="Vali H."/>
            <person name="Komeili A."/>
        </authorList>
    </citation>
    <scope>FUNCTION</scope>
    <scope>PROBABLE OPERON</scope>
    <scope>DISRUPTION PHENOTYPE</scope>
    <source>
        <strain>ATCC 700264 / AMB-1</strain>
    </source>
</reference>
<reference key="3">
    <citation type="journal article" date="2012" name="Mol. Microbiol.">
        <title>The magnetosome membrane protein, MmsF, is a major regulator of magnetite biomineralization in Magnetospirillum magneticum AMB-1.</title>
        <authorList>
            <person name="Murat D."/>
            <person name="Falahati V."/>
            <person name="Bertinetti L."/>
            <person name="Csencsits R."/>
            <person name="Koernig A."/>
            <person name="Downing K."/>
            <person name="Faivre D."/>
            <person name="Komeili A."/>
        </authorList>
    </citation>
    <scope>MINIMAL MAGNETOSOME ISLAND</scope>
    <source>
        <strain>ATCC 700264 / AMB-1</strain>
    </source>
</reference>
<reference key="4">
    <citation type="journal article" date="2016" name="MBio">
        <title>Dynamic Remodeling of the Magnetosome Membrane Is Triggered by the Initiation of Biomineralization.</title>
        <authorList>
            <person name="Cornejo E."/>
            <person name="Subramanian P."/>
            <person name="Li Z."/>
            <person name="Jensen G.J."/>
            <person name="Komeili A."/>
        </authorList>
    </citation>
    <scope>FUNCTION</scope>
    <scope>DISRUPTION PHENOTYPE</scope>
    <source>
        <strain>ATCC 700264 / AMB-1</strain>
    </source>
</reference>
<name>MAMQ1_PARM1</name>
<accession>Q2W8P9</accession>
<keyword id="KW-0091">Biomineralization</keyword>
<keyword id="KW-1281">Magnetosome</keyword>
<keyword id="KW-0472">Membrane</keyword>
<keyword id="KW-0812">Transmembrane</keyword>
<keyword id="KW-1133">Transmembrane helix</keyword>
<protein>
    <recommendedName>
        <fullName evidence="6">Magnetosome protein MamQ 1</fullName>
    </recommendedName>
</protein>
<evidence type="ECO:0000250" key="1">
    <source>
        <dbReference type="UniProtKB" id="Q93DY8"/>
    </source>
</evidence>
<evidence type="ECO:0000255" key="2"/>
<evidence type="ECO:0000269" key="3">
    <source>
    </source>
</evidence>
<evidence type="ECO:0000269" key="4">
    <source>
    </source>
</evidence>
<evidence type="ECO:0000269" key="5">
    <source>
    </source>
</evidence>
<evidence type="ECO:0000305" key="6"/>
<evidence type="ECO:0000305" key="7">
    <source>
    </source>
</evidence>
<evidence type="ECO:0000305" key="8">
    <source>
    </source>
</evidence>
<feature type="chain" id="PRO_0000447751" description="Magnetosome protein MamQ 1">
    <location>
        <begin position="1"/>
        <end position="272"/>
    </location>
</feature>
<feature type="topological domain" description="Cytoplasmic" evidence="6">
    <location>
        <begin position="1"/>
        <end position="46"/>
    </location>
</feature>
<feature type="transmembrane region" description="Helical" evidence="2">
    <location>
        <begin position="47"/>
        <end position="67"/>
    </location>
</feature>
<feature type="topological domain" description="Lumenal" evidence="6">
    <location>
        <begin position="68"/>
        <end position="272"/>
    </location>
</feature>
<dbReference type="EMBL" id="AP007255">
    <property type="protein sequence ID" value="BAE49776.1"/>
    <property type="status" value="ALT_INIT"/>
    <property type="molecule type" value="Genomic_DNA"/>
</dbReference>
<dbReference type="SMR" id="Q2W8P9"/>
<dbReference type="STRING" id="342108.amb0972"/>
<dbReference type="KEGG" id="mag:amb0972"/>
<dbReference type="HOGENOM" id="CLU_056714_0_0_5"/>
<dbReference type="OrthoDB" id="9804152at2"/>
<dbReference type="Proteomes" id="UP000007058">
    <property type="component" value="Chromosome"/>
</dbReference>
<dbReference type="GO" id="GO:0110146">
    <property type="term" value="C:magnetosome membrane"/>
    <property type="evidence" value="ECO:0000250"/>
    <property type="project" value="UniProtKB"/>
</dbReference>
<dbReference type="Gene3D" id="1.20.1440.20">
    <property type="entry name" value="LemA-like domain"/>
    <property type="match status" value="1"/>
</dbReference>
<dbReference type="InterPro" id="IPR023353">
    <property type="entry name" value="LemA-like_dom_sf"/>
</dbReference>
<dbReference type="InterPro" id="IPR007156">
    <property type="entry name" value="MamQ_LemA"/>
</dbReference>
<dbReference type="NCBIfam" id="NF040966">
    <property type="entry name" value="MamQ"/>
    <property type="match status" value="1"/>
</dbReference>
<dbReference type="PANTHER" id="PTHR34478">
    <property type="entry name" value="PROTEIN LEMA"/>
    <property type="match status" value="1"/>
</dbReference>
<dbReference type="PANTHER" id="PTHR34478:SF1">
    <property type="entry name" value="PROTEIN LEMA"/>
    <property type="match status" value="1"/>
</dbReference>
<dbReference type="Pfam" id="PF04011">
    <property type="entry name" value="LemA"/>
    <property type="match status" value="1"/>
</dbReference>
<dbReference type="SUPFAM" id="SSF140478">
    <property type="entry name" value="LemA-like"/>
    <property type="match status" value="1"/>
</dbReference>
<gene>
    <name type="primary">mamQ1</name>
    <name type="ordered locus">amb0972</name>
</gene>
<comment type="function">
    <text evidence="3 5">Essential for magnetosome formation (PubMed:20212111). Can be used to induce magnetosome formation (PubMed:26884433).</text>
</comment>
<comment type="subcellular location">
    <subcellularLocation>
        <location evidence="1">Magnetosome membrane</location>
        <topology evidence="2">Single-pass membrane protein</topology>
    </subcellularLocation>
</comment>
<comment type="induction">
    <text evidence="8">Part of the probable 18 gene mamAB operon.</text>
</comment>
<comment type="disruption phenotype">
    <text evidence="3 5">When both copies of this protein (amb0972 and amb1005) are deleted cells have no magnetic response and no magnetosome membranes. Deletion of just amb0972 leads to an intermediate magnetic response and still makes magnetosome membranes (PubMed:20212111). A careful electron cryotomography exam shows that in the double deletion empty vesicles that might be magnetosome precursors are present (PubMed:26884433). Deletion of genes mamH to mamV (amb0961 to amb0978) gives cells with no magnetosomes and no magnetic response (PubMed:20212111).</text>
</comment>
<comment type="miscellaneous">
    <text evidence="6">This bacteria makes up to 20 cubo-octahedral magnetosomes of about 45 nm in diameter which contain membrane-bound crystals of magnetite (Fe(3)O(4)).</text>
</comment>
<comment type="miscellaneous">
    <text evidence="4">Expression of just the minimal mamAB gene cluster (amb0961 to amb0978), including this gene, is sufficient to form a minimal magnetosome chain with small magnetite particles.</text>
</comment>
<comment type="miscellaneous">
    <text evidence="7">There is an identical gene in the genome (amb1005, AC Q2W8L6).</text>
</comment>
<comment type="similarity">
    <text evidence="6">Belongs to the LemA family.</text>
</comment>
<comment type="sequence caution" evidence="6">
    <conflict type="erroneous initiation">
        <sequence resource="EMBL-CDS" id="BAE49776"/>
    </conflict>
    <text>Extended N-terminus.</text>
</comment>
<organism>
    <name type="scientific">Paramagnetospirillum magneticum (strain ATCC 700264 / AMB-1)</name>
    <name type="common">Magnetospirillum magneticum</name>
    <dbReference type="NCBI Taxonomy" id="342108"/>
    <lineage>
        <taxon>Bacteria</taxon>
        <taxon>Pseudomonadati</taxon>
        <taxon>Pseudomonadota</taxon>
        <taxon>Alphaproteobacteria</taxon>
        <taxon>Rhodospirillales</taxon>
        <taxon>Magnetospirillaceae</taxon>
        <taxon>Paramagnetospirillum</taxon>
    </lineage>
</organism>
<proteinExistence type="inferred from homology"/>
<sequence length="272" mass="29948">MALGDANVGSAPGVDFSALQRVKQSEELLAQLYVVEETPRRLGRGPVHALMVISVLSVVAFIATLLMRYNTFVTMSEDTQAKRSNYEVMIQRRDNLFGNLVKLTLNHAALEHSIFSHTSDKRTEGVEAGKGGPIGSALEQLMKQGGIGKLLGDIGGGKALLGADGGFGNALGRLMAVVEQYPTIQSVDTYKHMMTSLVEMEDRIATRREDYNAAASTYNIEITKWPWNYLAFITGFKRAEYFQEKPAGDTPIITPQLFQELLPLNHAQDIKK</sequence>